<feature type="chain" id="PRO_0000312700" description="Keratin, type I cytoskeletal 27">
    <location>
        <begin position="1"/>
        <end position="460"/>
    </location>
</feature>
<feature type="domain" description="IF rod" evidence="4">
    <location>
        <begin position="84"/>
        <end position="399"/>
    </location>
</feature>
<feature type="region of interest" description="Head" evidence="3">
    <location>
        <begin position="1"/>
        <end position="83"/>
    </location>
</feature>
<feature type="region of interest" description="Coil 1A" evidence="3">
    <location>
        <begin position="84"/>
        <end position="119"/>
    </location>
</feature>
<feature type="region of interest" description="Linker 1" evidence="3">
    <location>
        <begin position="120"/>
        <end position="141"/>
    </location>
</feature>
<feature type="region of interest" description="Coil 1B" evidence="3">
    <location>
        <begin position="142"/>
        <end position="233"/>
    </location>
</feature>
<feature type="region of interest" description="Linker 12" evidence="3">
    <location>
        <begin position="234"/>
        <end position="256"/>
    </location>
</feature>
<feature type="region of interest" description="Coil 2" evidence="3">
    <location>
        <begin position="257"/>
        <end position="395"/>
    </location>
</feature>
<feature type="region of interest" description="Tail" evidence="3">
    <location>
        <begin position="396"/>
        <end position="460"/>
    </location>
</feature>
<feature type="region of interest" description="Disordered" evidence="5">
    <location>
        <begin position="429"/>
        <end position="460"/>
    </location>
</feature>
<feature type="compositionally biased region" description="Polar residues" evidence="5">
    <location>
        <begin position="448"/>
        <end position="460"/>
    </location>
</feature>
<gene>
    <name evidence="1" type="primary">KRT27</name>
</gene>
<reference evidence="7" key="1">
    <citation type="submission" date="2003-12" db="EMBL/GenBank/DDBJ databases">
        <authorList>
            <person name="Yin J."/>
            <person name="Li J.Q."/>
            <person name="Zhou H.M."/>
        </authorList>
    </citation>
    <scope>NUCLEOTIDE SEQUENCE [MRNA]</scope>
</reference>
<accession>Q6R649</accession>
<organism>
    <name type="scientific">Capra hircus</name>
    <name type="common">Goat</name>
    <dbReference type="NCBI Taxonomy" id="9925"/>
    <lineage>
        <taxon>Eukaryota</taxon>
        <taxon>Metazoa</taxon>
        <taxon>Chordata</taxon>
        <taxon>Craniata</taxon>
        <taxon>Vertebrata</taxon>
        <taxon>Euteleostomi</taxon>
        <taxon>Mammalia</taxon>
        <taxon>Eutheria</taxon>
        <taxon>Laurasiatheria</taxon>
        <taxon>Artiodactyla</taxon>
        <taxon>Ruminantia</taxon>
        <taxon>Pecora</taxon>
        <taxon>Bovidae</taxon>
        <taxon>Caprinae</taxon>
        <taxon>Capra</taxon>
    </lineage>
</organism>
<comment type="function">
    <text evidence="2">Essential for the proper assembly of type I and type II keratin protein complexes and formation of keratin intermediate filaments in the inner root sheath (irs).</text>
</comment>
<comment type="subunit">
    <text evidence="2 6">Heterotetramer of two type I and two type II keratins. Interacts with KRT6A to form filaments (By similarity).</text>
</comment>
<comment type="subcellular location">
    <subcellularLocation>
        <location evidence="2">Cytoplasm</location>
    </subcellularLocation>
</comment>
<comment type="miscellaneous">
    <text evidence="6">There are two types of cytoskeletal and microfibrillar keratin: I (acidic; 40-55 kDa) and II (neutral to basic; 56-70 kDa).</text>
</comment>
<comment type="similarity">
    <text evidence="4">Belongs to the intermediate filament family.</text>
</comment>
<keyword id="KW-0175">Coiled coil</keyword>
<keyword id="KW-0963">Cytoplasm</keyword>
<keyword id="KW-0403">Intermediate filament</keyword>
<keyword id="KW-0416">Keratin</keyword>
<keyword id="KW-1185">Reference proteome</keyword>
<sequence>MSVRFSSASRRLGSCGGAGSVRLSSGGAGFGVGSTGSVPGFGSGFTCAFGGSSSAGSYSGGLGGGSASCTAFTGNEHGLLSGNEKVTMQNLNDRLASYLDNVRALEEANADLEQKIKGWYEKFGPGSCRGLDHDYSRYFTVIDDLRNQIISATTSNANIVLQNDNARLTADDFRLKFENEQALHQSVDADVSSLRRVLDELTLCRTDLEIQLETLSEELAYLKKNHEEEMKALQCAAGGNVNVEMNAAPGVDLTVLLNNMRAEYEALAEQNRRDAEAWFNEKSASLQQQISDDAGATTSARNELTEMKRTLQTLEIELQSLLATKHSLECSLTETEGNYCAQLAQIQAQIGALEEQLHQVRTETEGQKLEYEQLLDIKVHLEKEIETYCRLIDGEDGSCTKSKGYGGPGNQIKDPSKATVVKTIVEEIDPRGKVPSSRVHTVEEKSTKVNNMKSEQRVPS</sequence>
<evidence type="ECO:0000250" key="1">
    <source>
        <dbReference type="UniProtKB" id="Q7Z3Y8"/>
    </source>
</evidence>
<evidence type="ECO:0000250" key="2">
    <source>
        <dbReference type="UniProtKB" id="Q9Z320"/>
    </source>
</evidence>
<evidence type="ECO:0000255" key="3"/>
<evidence type="ECO:0000255" key="4">
    <source>
        <dbReference type="PROSITE-ProRule" id="PRU01188"/>
    </source>
</evidence>
<evidence type="ECO:0000256" key="5">
    <source>
        <dbReference type="SAM" id="MobiDB-lite"/>
    </source>
</evidence>
<evidence type="ECO:0000305" key="6"/>
<evidence type="ECO:0000312" key="7">
    <source>
        <dbReference type="EMBL" id="AAS00519.1"/>
    </source>
</evidence>
<dbReference type="EMBL" id="AY510112">
    <property type="protein sequence ID" value="AAS00519.1"/>
    <property type="molecule type" value="mRNA"/>
</dbReference>
<dbReference type="RefSeq" id="NP_001272648.1">
    <property type="nucleotide sequence ID" value="NM_001285719.1"/>
</dbReference>
<dbReference type="SMR" id="Q6R649"/>
<dbReference type="STRING" id="9925.ENSCHIP00000029335"/>
<dbReference type="GeneID" id="100861382"/>
<dbReference type="KEGG" id="chx:100861382"/>
<dbReference type="CTD" id="342574"/>
<dbReference type="OrthoDB" id="2441647at2759"/>
<dbReference type="Proteomes" id="UP000291000">
    <property type="component" value="Unassembled WGS sequence"/>
</dbReference>
<dbReference type="Proteomes" id="UP000694566">
    <property type="component" value="Unplaced"/>
</dbReference>
<dbReference type="GO" id="GO:0005737">
    <property type="term" value="C:cytoplasm"/>
    <property type="evidence" value="ECO:0007669"/>
    <property type="project" value="UniProtKB-SubCell"/>
</dbReference>
<dbReference type="GO" id="GO:0005882">
    <property type="term" value="C:intermediate filament"/>
    <property type="evidence" value="ECO:0007669"/>
    <property type="project" value="UniProtKB-KW"/>
</dbReference>
<dbReference type="GO" id="GO:0005198">
    <property type="term" value="F:structural molecule activity"/>
    <property type="evidence" value="ECO:0007669"/>
    <property type="project" value="InterPro"/>
</dbReference>
<dbReference type="GO" id="GO:0030855">
    <property type="term" value="P:epithelial cell differentiation"/>
    <property type="evidence" value="ECO:0007669"/>
    <property type="project" value="TreeGrafter"/>
</dbReference>
<dbReference type="GO" id="GO:0031069">
    <property type="term" value="P:hair follicle morphogenesis"/>
    <property type="evidence" value="ECO:0007669"/>
    <property type="project" value="TreeGrafter"/>
</dbReference>
<dbReference type="GO" id="GO:0045109">
    <property type="term" value="P:intermediate filament organization"/>
    <property type="evidence" value="ECO:0007669"/>
    <property type="project" value="TreeGrafter"/>
</dbReference>
<dbReference type="FunFam" id="1.20.5.1160:FF:000002">
    <property type="entry name" value="Type I keratin 10"/>
    <property type="match status" value="1"/>
</dbReference>
<dbReference type="FunFam" id="1.20.5.170:FF:000002">
    <property type="entry name" value="Type I keratin KA11"/>
    <property type="match status" value="1"/>
</dbReference>
<dbReference type="FunFam" id="1.20.5.500:FF:000001">
    <property type="entry name" value="Type II keratin 23"/>
    <property type="match status" value="1"/>
</dbReference>
<dbReference type="Gene3D" id="1.20.5.170">
    <property type="match status" value="1"/>
</dbReference>
<dbReference type="Gene3D" id="1.20.5.500">
    <property type="entry name" value="Single helix bin"/>
    <property type="match status" value="1"/>
</dbReference>
<dbReference type="Gene3D" id="1.20.5.1160">
    <property type="entry name" value="Vasodilator-stimulated phosphoprotein"/>
    <property type="match status" value="1"/>
</dbReference>
<dbReference type="InterPro" id="IPR039008">
    <property type="entry name" value="IF_rod_dom"/>
</dbReference>
<dbReference type="InterPro" id="IPR002957">
    <property type="entry name" value="Keratin_I"/>
</dbReference>
<dbReference type="PANTHER" id="PTHR23239">
    <property type="entry name" value="INTERMEDIATE FILAMENT"/>
    <property type="match status" value="1"/>
</dbReference>
<dbReference type="PANTHER" id="PTHR23239:SF120">
    <property type="entry name" value="KERATIN, TYPE I CYTOSKELETAL 27"/>
    <property type="match status" value="1"/>
</dbReference>
<dbReference type="Pfam" id="PF00038">
    <property type="entry name" value="Filament"/>
    <property type="match status" value="1"/>
</dbReference>
<dbReference type="PRINTS" id="PR01248">
    <property type="entry name" value="TYPE1KERATIN"/>
</dbReference>
<dbReference type="SMART" id="SM01391">
    <property type="entry name" value="Filament"/>
    <property type="match status" value="1"/>
</dbReference>
<dbReference type="SUPFAM" id="SSF64593">
    <property type="entry name" value="Intermediate filament protein, coiled coil region"/>
    <property type="match status" value="2"/>
</dbReference>
<dbReference type="PROSITE" id="PS51842">
    <property type="entry name" value="IF_ROD_2"/>
    <property type="match status" value="1"/>
</dbReference>
<name>K1C27_CAPHI</name>
<proteinExistence type="evidence at transcript level"/>
<protein>
    <recommendedName>
        <fullName>Keratin, type I cytoskeletal 27</fullName>
    </recommendedName>
    <alternativeName>
        <fullName>Cytokeratin-27</fullName>
        <shortName>CK-27</shortName>
    </alternativeName>
    <alternativeName>
        <fullName>Keratin-27</fullName>
        <shortName>K27</shortName>
    </alternativeName>
    <alternativeName>
        <fullName>Type I inner root sheath-specific keratin-K25irs3</fullName>
    </alternativeName>
    <alternativeName>
        <fullName>Type I keratin intermediate filament C29</fullName>
    </alternativeName>
</protein>